<accession>Q8ZTA7</accession>
<evidence type="ECO:0000255" key="1">
    <source>
        <dbReference type="HAMAP-Rule" id="MF_00292"/>
    </source>
</evidence>
<evidence type="ECO:0000305" key="2"/>
<proteinExistence type="inferred from homology"/>
<sequence>MAEEVKFSPYEDAVAGLVVQILGRTGIAGEVTQVKIKILEGRDKGRVLTRNVKGPVRLGDIVMLRETEREARRITAR</sequence>
<keyword id="KW-1185">Reference proteome</keyword>
<keyword id="KW-0687">Ribonucleoprotein</keyword>
<keyword id="KW-0689">Ribosomal protein</keyword>
<feature type="chain" id="PRO_0000136855" description="Small ribosomal subunit protein eS28">
    <location>
        <begin position="1"/>
        <end position="77"/>
    </location>
</feature>
<comment type="similarity">
    <text evidence="1">Belongs to the eukaryotic ribosomal protein eS28 family.</text>
</comment>
<dbReference type="EMBL" id="AE009441">
    <property type="protein sequence ID" value="AAL64856.1"/>
    <property type="molecule type" value="Genomic_DNA"/>
</dbReference>
<dbReference type="RefSeq" id="WP_011009323.1">
    <property type="nucleotide sequence ID" value="NC_003364.1"/>
</dbReference>
<dbReference type="SMR" id="Q8ZTA7"/>
<dbReference type="FunCoup" id="Q8ZTA7">
    <property type="interactions" value="169"/>
</dbReference>
<dbReference type="STRING" id="178306.PAE3344"/>
<dbReference type="EnsemblBacteria" id="AAL64856">
    <property type="protein sequence ID" value="AAL64856"/>
    <property type="gene ID" value="PAE3344"/>
</dbReference>
<dbReference type="GeneID" id="1464046"/>
<dbReference type="KEGG" id="pai:PAE3344"/>
<dbReference type="PATRIC" id="fig|178306.9.peg.2520"/>
<dbReference type="eggNOG" id="arCOG04314">
    <property type="taxonomic scope" value="Archaea"/>
</dbReference>
<dbReference type="HOGENOM" id="CLU_178987_2_1_2"/>
<dbReference type="InParanoid" id="Q8ZTA7"/>
<dbReference type="Proteomes" id="UP000002439">
    <property type="component" value="Chromosome"/>
</dbReference>
<dbReference type="GO" id="GO:0022627">
    <property type="term" value="C:cytosolic small ribosomal subunit"/>
    <property type="evidence" value="ECO:0000318"/>
    <property type="project" value="GO_Central"/>
</dbReference>
<dbReference type="GO" id="GO:0003735">
    <property type="term" value="F:structural constituent of ribosome"/>
    <property type="evidence" value="ECO:0000318"/>
    <property type="project" value="GO_Central"/>
</dbReference>
<dbReference type="GO" id="GO:0030490">
    <property type="term" value="P:maturation of SSU-rRNA"/>
    <property type="evidence" value="ECO:0000318"/>
    <property type="project" value="GO_Central"/>
</dbReference>
<dbReference type="GO" id="GO:0000028">
    <property type="term" value="P:ribosomal small subunit assembly"/>
    <property type="evidence" value="ECO:0000318"/>
    <property type="project" value="GO_Central"/>
</dbReference>
<dbReference type="GO" id="GO:0006412">
    <property type="term" value="P:translation"/>
    <property type="evidence" value="ECO:0007669"/>
    <property type="project" value="UniProtKB-UniRule"/>
</dbReference>
<dbReference type="CDD" id="cd04457">
    <property type="entry name" value="S1_S28E"/>
    <property type="match status" value="1"/>
</dbReference>
<dbReference type="FunFam" id="2.40.50.140:FF:000145">
    <property type="entry name" value="30S ribosomal protein S28e"/>
    <property type="match status" value="1"/>
</dbReference>
<dbReference type="Gene3D" id="2.40.50.140">
    <property type="entry name" value="Nucleic acid-binding proteins"/>
    <property type="match status" value="1"/>
</dbReference>
<dbReference type="HAMAP" id="MF_00292">
    <property type="entry name" value="Ribosomal_eS28"/>
    <property type="match status" value="1"/>
</dbReference>
<dbReference type="InterPro" id="IPR012340">
    <property type="entry name" value="NA-bd_OB-fold"/>
</dbReference>
<dbReference type="InterPro" id="IPR000289">
    <property type="entry name" value="Ribosomal_eS28"/>
</dbReference>
<dbReference type="InterPro" id="IPR028626">
    <property type="entry name" value="Ribosomal_eS28_CS"/>
</dbReference>
<dbReference type="NCBIfam" id="NF003080">
    <property type="entry name" value="PRK04007.1"/>
    <property type="match status" value="1"/>
</dbReference>
<dbReference type="PANTHER" id="PTHR10769">
    <property type="entry name" value="40S RIBOSOMAL PROTEIN S28"/>
    <property type="match status" value="1"/>
</dbReference>
<dbReference type="PANTHER" id="PTHR10769:SF3">
    <property type="entry name" value="SMALL RIBOSOMAL SUBUNIT PROTEIN ES28"/>
    <property type="match status" value="1"/>
</dbReference>
<dbReference type="Pfam" id="PF01200">
    <property type="entry name" value="Ribosomal_S28e"/>
    <property type="match status" value="1"/>
</dbReference>
<dbReference type="SUPFAM" id="SSF50249">
    <property type="entry name" value="Nucleic acid-binding proteins"/>
    <property type="match status" value="1"/>
</dbReference>
<dbReference type="PROSITE" id="PS00961">
    <property type="entry name" value="RIBOSOMAL_S28E"/>
    <property type="match status" value="1"/>
</dbReference>
<organism>
    <name type="scientific">Pyrobaculum aerophilum (strain ATCC 51768 / DSM 7523 / JCM 9630 / CIP 104966 / NBRC 100827 / IM2)</name>
    <dbReference type="NCBI Taxonomy" id="178306"/>
    <lineage>
        <taxon>Archaea</taxon>
        <taxon>Thermoproteota</taxon>
        <taxon>Thermoprotei</taxon>
        <taxon>Thermoproteales</taxon>
        <taxon>Thermoproteaceae</taxon>
        <taxon>Pyrobaculum</taxon>
    </lineage>
</organism>
<gene>
    <name evidence="1" type="primary">rps28e</name>
    <name type="ordered locus">PAE3344</name>
</gene>
<reference key="1">
    <citation type="journal article" date="2002" name="Proc. Natl. Acad. Sci. U.S.A.">
        <title>Genome sequence of the hyperthermophilic crenarchaeon Pyrobaculum aerophilum.</title>
        <authorList>
            <person name="Fitz-Gibbon S.T."/>
            <person name="Ladner H."/>
            <person name="Kim U.-J."/>
            <person name="Stetter K.O."/>
            <person name="Simon M.I."/>
            <person name="Miller J.H."/>
        </authorList>
    </citation>
    <scope>NUCLEOTIDE SEQUENCE [LARGE SCALE GENOMIC DNA]</scope>
    <source>
        <strain>ATCC 51768 / DSM 7523 / JCM 9630 / CIP 104966 / NBRC 100827 / IM2</strain>
    </source>
</reference>
<protein>
    <recommendedName>
        <fullName evidence="1">Small ribosomal subunit protein eS28</fullName>
    </recommendedName>
    <alternativeName>
        <fullName evidence="2">30S ribosomal protein S28e</fullName>
    </alternativeName>
</protein>
<name>RS28_PYRAE</name>